<keyword id="KW-0002">3D-structure</keyword>
<keyword id="KW-0007">Acetylation</keyword>
<keyword id="KW-0520">NAD</keyword>
<keyword id="KW-1185">Reference proteome</keyword>
<keyword id="KW-0808">Transferase</keyword>
<keyword id="KW-0819">tRNA processing</keyword>
<gene>
    <name type="primary">Trpt1</name>
    <name type="synonym">Tpt1h</name>
</gene>
<dbReference type="EC" id="2.7.1.160"/>
<dbReference type="EMBL" id="BC027575">
    <property type="protein sequence ID" value="AAH27575.1"/>
    <property type="status" value="ALT_INIT"/>
    <property type="molecule type" value="mRNA"/>
</dbReference>
<dbReference type="CCDS" id="CCDS50375.1"/>
<dbReference type="RefSeq" id="NP_705825.2">
    <property type="nucleotide sequence ID" value="NM_153597.2"/>
</dbReference>
<dbReference type="RefSeq" id="XP_006526640.1">
    <property type="nucleotide sequence ID" value="XM_006526577.5"/>
</dbReference>
<dbReference type="RefSeq" id="XP_036017277.1">
    <property type="nucleotide sequence ID" value="XM_036161384.1"/>
</dbReference>
<dbReference type="PDB" id="7YW2">
    <property type="method" value="X-ray"/>
    <property type="resolution" value="2.23 A"/>
    <property type="chains" value="A=1-249"/>
</dbReference>
<dbReference type="PDBsum" id="7YW2"/>
<dbReference type="SMR" id="Q8K3A2"/>
<dbReference type="FunCoup" id="Q8K3A2">
    <property type="interactions" value="20"/>
</dbReference>
<dbReference type="STRING" id="10090.ENSMUSP00000085555"/>
<dbReference type="PhosphoSitePlus" id="Q8K3A2"/>
<dbReference type="PaxDb" id="10090-ENSMUSP00000085555"/>
<dbReference type="ProteomicsDB" id="300028"/>
<dbReference type="Pumba" id="Q8K3A2"/>
<dbReference type="Antibodypedia" id="51851">
    <property type="antibodies" value="34 antibodies from 14 providers"/>
</dbReference>
<dbReference type="DNASU" id="107328"/>
<dbReference type="Ensembl" id="ENSMUST00000088223.7">
    <property type="protein sequence ID" value="ENSMUSP00000085555.6"/>
    <property type="gene ID" value="ENSMUSG00000047656.10"/>
</dbReference>
<dbReference type="GeneID" id="107328"/>
<dbReference type="KEGG" id="mmu:107328"/>
<dbReference type="UCSC" id="uc008gka.2">
    <property type="organism name" value="mouse"/>
</dbReference>
<dbReference type="AGR" id="MGI:1333115"/>
<dbReference type="CTD" id="83707"/>
<dbReference type="MGI" id="MGI:1333115">
    <property type="gene designation" value="Trpt1"/>
</dbReference>
<dbReference type="VEuPathDB" id="HostDB:ENSMUSG00000047656"/>
<dbReference type="eggNOG" id="KOG2278">
    <property type="taxonomic scope" value="Eukaryota"/>
</dbReference>
<dbReference type="GeneTree" id="ENSGT00390000002731"/>
<dbReference type="HOGENOM" id="CLU_052998_1_1_1"/>
<dbReference type="InParanoid" id="Q8K3A2"/>
<dbReference type="OMA" id="RHGASQM"/>
<dbReference type="PhylomeDB" id="Q8K3A2"/>
<dbReference type="TreeFam" id="TF324127"/>
<dbReference type="BioGRID-ORCS" id="107328">
    <property type="hits" value="4 hits in 78 CRISPR screens"/>
</dbReference>
<dbReference type="PRO" id="PR:Q8K3A2"/>
<dbReference type="Proteomes" id="UP000000589">
    <property type="component" value="Chromosome 19"/>
</dbReference>
<dbReference type="RNAct" id="Q8K3A2">
    <property type="molecule type" value="protein"/>
</dbReference>
<dbReference type="Bgee" id="ENSMUSG00000047656">
    <property type="expression patterns" value="Expressed in interventricular septum and 182 other cell types or tissues"/>
</dbReference>
<dbReference type="GO" id="GO:0000215">
    <property type="term" value="F:tRNA 2'-phosphotransferase activity"/>
    <property type="evidence" value="ECO:0000314"/>
    <property type="project" value="MGI"/>
</dbReference>
<dbReference type="GO" id="GO:0006388">
    <property type="term" value="P:tRNA splicing, via endonucleolytic cleavage and ligation"/>
    <property type="evidence" value="ECO:0000314"/>
    <property type="project" value="MGI"/>
</dbReference>
<dbReference type="FunFam" id="3.20.170.30:FF:000002">
    <property type="entry name" value="Phosphotransferase, putative"/>
    <property type="match status" value="1"/>
</dbReference>
<dbReference type="FunFam" id="1.10.10.970:FF:000002">
    <property type="entry name" value="Tpt1p"/>
    <property type="match status" value="1"/>
</dbReference>
<dbReference type="Gene3D" id="3.20.170.30">
    <property type="match status" value="1"/>
</dbReference>
<dbReference type="Gene3D" id="1.10.10.970">
    <property type="entry name" value="RNA 2'-phosphotransferase, Tpt1/KptA family, N-terminal domain"/>
    <property type="match status" value="1"/>
</dbReference>
<dbReference type="InterPro" id="IPR002745">
    <property type="entry name" value="Ptrans_KptA/Tpt1"/>
</dbReference>
<dbReference type="InterPro" id="IPR042081">
    <property type="entry name" value="RNA_2'-PTrans_C"/>
</dbReference>
<dbReference type="InterPro" id="IPR042080">
    <property type="entry name" value="RNA_2'-PTrans_N"/>
</dbReference>
<dbReference type="PANTHER" id="PTHR12684">
    <property type="entry name" value="PUTATIVE PHOSPHOTRANSFERASE"/>
    <property type="match status" value="1"/>
</dbReference>
<dbReference type="PANTHER" id="PTHR12684:SF2">
    <property type="entry name" value="TRNA 2'-PHOSPHOTRANSFERASE 1"/>
    <property type="match status" value="1"/>
</dbReference>
<dbReference type="Pfam" id="PF01885">
    <property type="entry name" value="PTS_2-RNA"/>
    <property type="match status" value="1"/>
</dbReference>
<dbReference type="SUPFAM" id="SSF56399">
    <property type="entry name" value="ADP-ribosylation"/>
    <property type="match status" value="1"/>
</dbReference>
<proteinExistence type="evidence at protein level"/>
<organism>
    <name type="scientific">Mus musculus</name>
    <name type="common">Mouse</name>
    <dbReference type="NCBI Taxonomy" id="10090"/>
    <lineage>
        <taxon>Eukaryota</taxon>
        <taxon>Metazoa</taxon>
        <taxon>Chordata</taxon>
        <taxon>Craniata</taxon>
        <taxon>Vertebrata</taxon>
        <taxon>Euteleostomi</taxon>
        <taxon>Mammalia</taxon>
        <taxon>Eutheria</taxon>
        <taxon>Euarchontoglires</taxon>
        <taxon>Glires</taxon>
        <taxon>Rodentia</taxon>
        <taxon>Myomorpha</taxon>
        <taxon>Muroidea</taxon>
        <taxon>Muridae</taxon>
        <taxon>Murinae</taxon>
        <taxon>Mus</taxon>
        <taxon>Mus</taxon>
    </lineage>
</organism>
<feature type="chain" id="PRO_0000273364" description="tRNA 2'-phosphotransferase 1">
    <location>
        <begin position="1"/>
        <end position="249"/>
    </location>
</feature>
<feature type="region of interest" description="Disordered" evidence="2">
    <location>
        <begin position="1"/>
        <end position="25"/>
    </location>
</feature>
<feature type="region of interest" description="Disordered" evidence="2">
    <location>
        <begin position="220"/>
        <end position="249"/>
    </location>
</feature>
<feature type="modified residue" description="N-acetylmethionine" evidence="1">
    <location>
        <position position="1"/>
    </location>
</feature>
<feature type="helix" evidence="5">
    <location>
        <begin position="20"/>
        <end position="35"/>
    </location>
</feature>
<feature type="turn" evidence="5">
    <location>
        <begin position="36"/>
        <end position="42"/>
    </location>
</feature>
<feature type="helix" evidence="5">
    <location>
        <begin position="53"/>
        <end position="57"/>
    </location>
</feature>
<feature type="helix" evidence="5">
    <location>
        <begin position="60"/>
        <end position="62"/>
    </location>
</feature>
<feature type="helix" evidence="5">
    <location>
        <begin position="67"/>
        <end position="76"/>
    </location>
</feature>
<feature type="strand" evidence="5">
    <location>
        <begin position="82"/>
        <end position="86"/>
    </location>
</feature>
<feature type="turn" evidence="5">
    <location>
        <begin position="89"/>
        <end position="91"/>
    </location>
</feature>
<feature type="strand" evidence="5">
    <location>
        <begin position="93"/>
        <end position="99"/>
    </location>
</feature>
<feature type="strand" evidence="5">
    <location>
        <begin position="111"/>
        <end position="113"/>
    </location>
</feature>
<feature type="turn" evidence="5">
    <location>
        <begin position="116"/>
        <end position="118"/>
    </location>
</feature>
<feature type="strand" evidence="5">
    <location>
        <begin position="124"/>
        <end position="127"/>
    </location>
</feature>
<feature type="helix" evidence="5">
    <location>
        <begin position="129"/>
        <end position="131"/>
    </location>
</feature>
<feature type="helix" evidence="5">
    <location>
        <begin position="132"/>
        <end position="138"/>
    </location>
</feature>
<feature type="strand" evidence="5">
    <location>
        <begin position="145"/>
        <end position="154"/>
    </location>
</feature>
<feature type="strand" evidence="5">
    <location>
        <begin position="161"/>
        <end position="164"/>
    </location>
</feature>
<feature type="strand" evidence="5">
    <location>
        <begin position="169"/>
        <end position="174"/>
    </location>
</feature>
<feature type="helix" evidence="5">
    <location>
        <begin position="176"/>
        <end position="181"/>
    </location>
</feature>
<feature type="strand" evidence="5">
    <location>
        <begin position="186"/>
        <end position="188"/>
    </location>
</feature>
<feature type="strand" evidence="5">
    <location>
        <begin position="194"/>
        <end position="196"/>
    </location>
</feature>
<feature type="strand" evidence="5">
    <location>
        <begin position="202"/>
        <end position="204"/>
    </location>
</feature>
<feature type="helix" evidence="5">
    <location>
        <begin position="206"/>
        <end position="208"/>
    </location>
</feature>
<feature type="strand" evidence="5">
    <location>
        <begin position="209"/>
        <end position="214"/>
    </location>
</feature>
<feature type="strand" evidence="5">
    <location>
        <begin position="216"/>
        <end position="218"/>
    </location>
</feature>
<feature type="strand" evidence="5">
    <location>
        <begin position="220"/>
        <end position="222"/>
    </location>
</feature>
<accession>Q8K3A2</accession>
<evidence type="ECO:0000250" key="1">
    <source>
        <dbReference type="UniProtKB" id="Q86TN4"/>
    </source>
</evidence>
<evidence type="ECO:0000256" key="2">
    <source>
        <dbReference type="SAM" id="MobiDB-lite"/>
    </source>
</evidence>
<evidence type="ECO:0000269" key="3">
    <source>
    </source>
</evidence>
<evidence type="ECO:0000305" key="4"/>
<evidence type="ECO:0007829" key="5">
    <source>
        <dbReference type="PDB" id="7YW2"/>
    </source>
</evidence>
<protein>
    <recommendedName>
        <fullName>tRNA 2'-phosphotransferase 1</fullName>
        <shortName>mTPT1</shortName>
        <ecNumber>2.7.1.160</ecNumber>
    </recommendedName>
</protein>
<sequence>MNAPGGRRKEGRRTHRPREQDRNVQLSKALSYALRHGALKLGLPMRADGFVPLQALLQLPQFHSFSIEDVQLVVNTNEKQRFTLQPGEPSTGLLIRANQGHSLQVPELELTPLETPQALPLTLVHGTFWKHWPSILLKGLSRQGRTHIHLASGLPGDPGVISGIRPNCEVAVFIDGPLALTDGIPFFCSANGVILTPGNAEGFLLPKYFKEALQLRPTRKPLSLAGDKETETQSGPKLSSRGGRRKIQQ</sequence>
<comment type="function">
    <text evidence="3">Catalyzes the last step of tRNA splicing, the transfer of the splice junction 2'-phosphate from ligated tRNA to NAD to produce ADP-ribose 1''-2'' cyclic phosphate.</text>
</comment>
<comment type="catalytic activity">
    <reaction evidence="3">
        <text>2'-phospho-[ligated tRNA] + NAD(+) = mature tRNA + ADP-alpha-D-ribose 1'',2''-cyclic phosphate + nicotinamide</text>
        <dbReference type="Rhea" id="RHEA:23324"/>
        <dbReference type="Rhea" id="RHEA-COMP:11106"/>
        <dbReference type="Rhea" id="RHEA-COMP:11107"/>
        <dbReference type="ChEBI" id="CHEBI:17154"/>
        <dbReference type="ChEBI" id="CHEBI:57540"/>
        <dbReference type="ChEBI" id="CHEBI:76596"/>
        <dbReference type="ChEBI" id="CHEBI:82883"/>
        <dbReference type="ChEBI" id="CHEBI:85027"/>
        <dbReference type="EC" id="2.7.1.160"/>
    </reaction>
</comment>
<comment type="similarity">
    <text evidence="4">Belongs to the KptA/TPT1 family.</text>
</comment>
<comment type="sequence caution" evidence="4">
    <conflict type="erroneous initiation">
        <sequence resource="EMBL-CDS" id="AAH27575"/>
    </conflict>
</comment>
<reference key="1">
    <citation type="journal article" date="2004" name="Genome Res.">
        <title>The status, quality, and expansion of the NIH full-length cDNA project: the Mammalian Gene Collection (MGC).</title>
        <authorList>
            <consortium name="The MGC Project Team"/>
        </authorList>
    </citation>
    <scope>NUCLEOTIDE SEQUENCE [LARGE SCALE MRNA]</scope>
    <source>
        <strain>C57BL/6J</strain>
        <tissue>Mammary gland</tissue>
    </source>
</reference>
<reference key="2">
    <citation type="journal article" date="1998" name="Proc. Natl. Acad. Sci. U.S.A.">
        <title>A functional homolog of a yeast tRNA splicing enzyme is conserved in higher eukaryotes and in Escherichia coli.</title>
        <authorList>
            <person name="Spinelli S.L."/>
            <person name="Malik H.S."/>
            <person name="Consaul S.A."/>
            <person name="Phizicky E.M."/>
        </authorList>
    </citation>
    <scope>FUNCTION</scope>
    <scope>ENZYME ACTIVITY</scope>
</reference>
<name>TRPT1_MOUSE</name>